<evidence type="ECO:0000255" key="1">
    <source>
        <dbReference type="HAMAP-Rule" id="MF_00446"/>
    </source>
</evidence>
<sequence>MQRHMLKSKIHRAAVTHCELHYEGSCAIDEDLLEAAGLIENERIDIWNINNGERFSTYAIKGERGSGMISLNGSAARRAQLGDLVIIAAFAMVDEAELQAGWKPKLVFIDEGNKIKGHRDHVPTQNWT</sequence>
<keyword id="KW-0068">Autocatalytic cleavage</keyword>
<keyword id="KW-0963">Cytoplasm</keyword>
<keyword id="KW-0210">Decarboxylase</keyword>
<keyword id="KW-0456">Lyase</keyword>
<keyword id="KW-0566">Pantothenate biosynthesis</keyword>
<keyword id="KW-0670">Pyruvate</keyword>
<keyword id="KW-0704">Schiff base</keyword>
<keyword id="KW-0865">Zymogen</keyword>
<organism>
    <name type="scientific">Burkholderia cenocepacia (strain ATCC BAA-245 / DSM 16553 / LMG 16656 / NCTC 13227 / J2315 / CF5610)</name>
    <name type="common">Burkholderia cepacia (strain J2315)</name>
    <dbReference type="NCBI Taxonomy" id="216591"/>
    <lineage>
        <taxon>Bacteria</taxon>
        <taxon>Pseudomonadati</taxon>
        <taxon>Pseudomonadota</taxon>
        <taxon>Betaproteobacteria</taxon>
        <taxon>Burkholderiales</taxon>
        <taxon>Burkholderiaceae</taxon>
        <taxon>Burkholderia</taxon>
        <taxon>Burkholderia cepacia complex</taxon>
    </lineage>
</organism>
<comment type="function">
    <text evidence="1">Catalyzes the pyruvoyl-dependent decarboxylation of aspartate to produce beta-alanine.</text>
</comment>
<comment type="catalytic activity">
    <reaction evidence="1">
        <text>L-aspartate + H(+) = beta-alanine + CO2</text>
        <dbReference type="Rhea" id="RHEA:19497"/>
        <dbReference type="ChEBI" id="CHEBI:15378"/>
        <dbReference type="ChEBI" id="CHEBI:16526"/>
        <dbReference type="ChEBI" id="CHEBI:29991"/>
        <dbReference type="ChEBI" id="CHEBI:57966"/>
        <dbReference type="EC" id="4.1.1.11"/>
    </reaction>
</comment>
<comment type="cofactor">
    <cofactor evidence="1">
        <name>pyruvate</name>
        <dbReference type="ChEBI" id="CHEBI:15361"/>
    </cofactor>
    <text evidence="1">Binds 1 pyruvoyl group covalently per subunit.</text>
</comment>
<comment type="pathway">
    <text evidence="1">Cofactor biosynthesis; (R)-pantothenate biosynthesis; beta-alanine from L-aspartate: step 1/1.</text>
</comment>
<comment type="subunit">
    <text evidence="1">Heterooctamer of four alpha and four beta subunits.</text>
</comment>
<comment type="subcellular location">
    <subcellularLocation>
        <location evidence="1">Cytoplasm</location>
    </subcellularLocation>
</comment>
<comment type="PTM">
    <text evidence="1">Is synthesized initially as an inactive proenzyme, which is activated by self-cleavage at a specific serine bond to produce a beta-subunit with a hydroxyl group at its C-terminus and an alpha-subunit with a pyruvoyl group at its N-terminus.</text>
</comment>
<comment type="similarity">
    <text evidence="1">Belongs to the PanD family.</text>
</comment>
<name>PAND_BURCJ</name>
<reference key="1">
    <citation type="journal article" date="2009" name="J. Bacteriol.">
        <title>The genome of Burkholderia cenocepacia J2315, an epidemic pathogen of cystic fibrosis patients.</title>
        <authorList>
            <person name="Holden M.T."/>
            <person name="Seth-Smith H.M."/>
            <person name="Crossman L.C."/>
            <person name="Sebaihia M."/>
            <person name="Bentley S.D."/>
            <person name="Cerdeno-Tarraga A.M."/>
            <person name="Thomson N.R."/>
            <person name="Bason N."/>
            <person name="Quail M.A."/>
            <person name="Sharp S."/>
            <person name="Cherevach I."/>
            <person name="Churcher C."/>
            <person name="Goodhead I."/>
            <person name="Hauser H."/>
            <person name="Holroyd N."/>
            <person name="Mungall K."/>
            <person name="Scott P."/>
            <person name="Walker D."/>
            <person name="White B."/>
            <person name="Rose H."/>
            <person name="Iversen P."/>
            <person name="Mil-Homens D."/>
            <person name="Rocha E.P."/>
            <person name="Fialho A.M."/>
            <person name="Baldwin A."/>
            <person name="Dowson C."/>
            <person name="Barrell B.G."/>
            <person name="Govan J.R."/>
            <person name="Vandamme P."/>
            <person name="Hart C.A."/>
            <person name="Mahenthiralingam E."/>
            <person name="Parkhill J."/>
        </authorList>
    </citation>
    <scope>NUCLEOTIDE SEQUENCE [LARGE SCALE GENOMIC DNA]</scope>
    <source>
        <strain>ATCC BAA-245 / DSM 16553 / LMG 16656 / NCTC 13227 / J2315 / CF5610</strain>
    </source>
</reference>
<dbReference type="EC" id="4.1.1.11" evidence="1"/>
<dbReference type="EMBL" id="AM747720">
    <property type="protein sequence ID" value="CAR52954.1"/>
    <property type="molecule type" value="Genomic_DNA"/>
</dbReference>
<dbReference type="RefSeq" id="WP_006484038.1">
    <property type="nucleotide sequence ID" value="NC_011000.1"/>
</dbReference>
<dbReference type="SMR" id="B4E8E6"/>
<dbReference type="GeneID" id="93029811"/>
<dbReference type="KEGG" id="bcj:BCAL2652"/>
<dbReference type="eggNOG" id="COG0853">
    <property type="taxonomic scope" value="Bacteria"/>
</dbReference>
<dbReference type="HOGENOM" id="CLU_115305_2_1_4"/>
<dbReference type="BioCyc" id="BCEN216591:G1G1V-2940-MONOMER"/>
<dbReference type="UniPathway" id="UPA00028">
    <property type="reaction ID" value="UER00002"/>
</dbReference>
<dbReference type="Proteomes" id="UP000001035">
    <property type="component" value="Chromosome 1"/>
</dbReference>
<dbReference type="GO" id="GO:0005829">
    <property type="term" value="C:cytosol"/>
    <property type="evidence" value="ECO:0007669"/>
    <property type="project" value="TreeGrafter"/>
</dbReference>
<dbReference type="GO" id="GO:0004068">
    <property type="term" value="F:aspartate 1-decarboxylase activity"/>
    <property type="evidence" value="ECO:0007669"/>
    <property type="project" value="UniProtKB-UniRule"/>
</dbReference>
<dbReference type="GO" id="GO:0006523">
    <property type="term" value="P:alanine biosynthetic process"/>
    <property type="evidence" value="ECO:0007669"/>
    <property type="project" value="InterPro"/>
</dbReference>
<dbReference type="GO" id="GO:0015940">
    <property type="term" value="P:pantothenate biosynthetic process"/>
    <property type="evidence" value="ECO:0007669"/>
    <property type="project" value="UniProtKB-UniRule"/>
</dbReference>
<dbReference type="CDD" id="cd06919">
    <property type="entry name" value="Asp_decarbox"/>
    <property type="match status" value="1"/>
</dbReference>
<dbReference type="Gene3D" id="2.40.40.20">
    <property type="match status" value="1"/>
</dbReference>
<dbReference type="HAMAP" id="MF_00446">
    <property type="entry name" value="PanD"/>
    <property type="match status" value="1"/>
</dbReference>
<dbReference type="InterPro" id="IPR009010">
    <property type="entry name" value="Asp_de-COase-like_dom_sf"/>
</dbReference>
<dbReference type="InterPro" id="IPR003190">
    <property type="entry name" value="Asp_decarbox"/>
</dbReference>
<dbReference type="NCBIfam" id="TIGR00223">
    <property type="entry name" value="panD"/>
    <property type="match status" value="1"/>
</dbReference>
<dbReference type="PANTHER" id="PTHR21012">
    <property type="entry name" value="ASPARTATE 1-DECARBOXYLASE"/>
    <property type="match status" value="1"/>
</dbReference>
<dbReference type="PANTHER" id="PTHR21012:SF0">
    <property type="entry name" value="ASPARTATE 1-DECARBOXYLASE"/>
    <property type="match status" value="1"/>
</dbReference>
<dbReference type="Pfam" id="PF02261">
    <property type="entry name" value="Asp_decarbox"/>
    <property type="match status" value="1"/>
</dbReference>
<dbReference type="PIRSF" id="PIRSF006246">
    <property type="entry name" value="Asp_decarbox"/>
    <property type="match status" value="1"/>
</dbReference>
<dbReference type="SUPFAM" id="SSF50692">
    <property type="entry name" value="ADC-like"/>
    <property type="match status" value="1"/>
</dbReference>
<proteinExistence type="inferred from homology"/>
<accession>B4E8E6</accession>
<gene>
    <name evidence="1" type="primary">panD</name>
    <name type="ordered locus">BceJ2315_25920</name>
    <name type="ORF">BCAL2652</name>
</gene>
<protein>
    <recommendedName>
        <fullName evidence="1">Aspartate 1-decarboxylase</fullName>
        <ecNumber evidence="1">4.1.1.11</ecNumber>
    </recommendedName>
    <alternativeName>
        <fullName evidence="1">Aspartate alpha-decarboxylase</fullName>
    </alternativeName>
    <component>
        <recommendedName>
            <fullName evidence="1">Aspartate 1-decarboxylase beta chain</fullName>
        </recommendedName>
    </component>
    <component>
        <recommendedName>
            <fullName evidence="1">Aspartate 1-decarboxylase alpha chain</fullName>
        </recommendedName>
    </component>
</protein>
<feature type="chain" id="PRO_1000191934" description="Aspartate 1-decarboxylase beta chain" evidence="1">
    <location>
        <begin position="1"/>
        <end position="24"/>
    </location>
</feature>
<feature type="chain" id="PRO_1000191935" description="Aspartate 1-decarboxylase alpha chain" evidence="1">
    <location>
        <begin position="25"/>
        <end position="128"/>
    </location>
</feature>
<feature type="active site" description="Schiff-base intermediate with substrate; via pyruvic acid" evidence="1">
    <location>
        <position position="25"/>
    </location>
</feature>
<feature type="active site" description="Proton donor" evidence="1">
    <location>
        <position position="58"/>
    </location>
</feature>
<feature type="binding site" evidence="1">
    <location>
        <position position="57"/>
    </location>
    <ligand>
        <name>substrate</name>
    </ligand>
</feature>
<feature type="binding site" evidence="1">
    <location>
        <begin position="73"/>
        <end position="75"/>
    </location>
    <ligand>
        <name>substrate</name>
    </ligand>
</feature>
<feature type="modified residue" description="Pyruvic acid (Ser)" evidence="1">
    <location>
        <position position="25"/>
    </location>
</feature>